<proteinExistence type="inferred from homology"/>
<evidence type="ECO:0000250" key="1">
    <source>
        <dbReference type="UniProtKB" id="Q9BQ65"/>
    </source>
</evidence>
<evidence type="ECO:0000255" key="2">
    <source>
        <dbReference type="HAMAP-Rule" id="MF_03040"/>
    </source>
</evidence>
<evidence type="ECO:0000256" key="3">
    <source>
        <dbReference type="SAM" id="MobiDB-lite"/>
    </source>
</evidence>
<reference key="1">
    <citation type="journal article" date="2005" name="Nature">
        <title>The genome of the social amoeba Dictyostelium discoideum.</title>
        <authorList>
            <person name="Eichinger L."/>
            <person name="Pachebat J.A."/>
            <person name="Gloeckner G."/>
            <person name="Rajandream M.A."/>
            <person name="Sucgang R."/>
            <person name="Berriman M."/>
            <person name="Song J."/>
            <person name="Olsen R."/>
            <person name="Szafranski K."/>
            <person name="Xu Q."/>
            <person name="Tunggal B."/>
            <person name="Kummerfeld S."/>
            <person name="Madera M."/>
            <person name="Konfortov B.A."/>
            <person name="Rivero F."/>
            <person name="Bankier A.T."/>
            <person name="Lehmann R."/>
            <person name="Hamlin N."/>
            <person name="Davies R."/>
            <person name="Gaudet P."/>
            <person name="Fey P."/>
            <person name="Pilcher K."/>
            <person name="Chen G."/>
            <person name="Saunders D."/>
            <person name="Sodergren E.J."/>
            <person name="Davis P."/>
            <person name="Kerhornou A."/>
            <person name="Nie X."/>
            <person name="Hall N."/>
            <person name="Anjard C."/>
            <person name="Hemphill L."/>
            <person name="Bason N."/>
            <person name="Farbrother P."/>
            <person name="Desany B."/>
            <person name="Just E."/>
            <person name="Morio T."/>
            <person name="Rost R."/>
            <person name="Churcher C.M."/>
            <person name="Cooper J."/>
            <person name="Haydock S."/>
            <person name="van Driessche N."/>
            <person name="Cronin A."/>
            <person name="Goodhead I."/>
            <person name="Muzny D.M."/>
            <person name="Mourier T."/>
            <person name="Pain A."/>
            <person name="Lu M."/>
            <person name="Harper D."/>
            <person name="Lindsay R."/>
            <person name="Hauser H."/>
            <person name="James K.D."/>
            <person name="Quiles M."/>
            <person name="Madan Babu M."/>
            <person name="Saito T."/>
            <person name="Buchrieser C."/>
            <person name="Wardroper A."/>
            <person name="Felder M."/>
            <person name="Thangavelu M."/>
            <person name="Johnson D."/>
            <person name="Knights A."/>
            <person name="Loulseged H."/>
            <person name="Mungall K.L."/>
            <person name="Oliver K."/>
            <person name="Price C."/>
            <person name="Quail M.A."/>
            <person name="Urushihara H."/>
            <person name="Hernandez J."/>
            <person name="Rabbinowitsch E."/>
            <person name="Steffen D."/>
            <person name="Sanders M."/>
            <person name="Ma J."/>
            <person name="Kohara Y."/>
            <person name="Sharp S."/>
            <person name="Simmonds M.N."/>
            <person name="Spiegler S."/>
            <person name="Tivey A."/>
            <person name="Sugano S."/>
            <person name="White B."/>
            <person name="Walker D."/>
            <person name="Woodward J.R."/>
            <person name="Winckler T."/>
            <person name="Tanaka Y."/>
            <person name="Shaulsky G."/>
            <person name="Schleicher M."/>
            <person name="Weinstock G.M."/>
            <person name="Rosenthal A."/>
            <person name="Cox E.C."/>
            <person name="Chisholm R.L."/>
            <person name="Gibbs R.A."/>
            <person name="Loomis W.F."/>
            <person name="Platzer M."/>
            <person name="Kay R.R."/>
            <person name="Williams J.G."/>
            <person name="Dear P.H."/>
            <person name="Noegel A.A."/>
            <person name="Barrell B.G."/>
            <person name="Kuspa A."/>
        </authorList>
    </citation>
    <scope>NUCLEOTIDE SEQUENCE [LARGE SCALE GENOMIC DNA]</scope>
    <source>
        <strain>AX4</strain>
    </source>
</reference>
<dbReference type="EC" id="4.6.1.-" evidence="1"/>
<dbReference type="EMBL" id="AAFI02000035">
    <property type="protein sequence ID" value="EAL67455.1"/>
    <property type="molecule type" value="Genomic_DNA"/>
</dbReference>
<dbReference type="RefSeq" id="XP_641434.1">
    <property type="nucleotide sequence ID" value="XM_636342.1"/>
</dbReference>
<dbReference type="SMR" id="Q54W16"/>
<dbReference type="FunCoup" id="Q54W16">
    <property type="interactions" value="1"/>
</dbReference>
<dbReference type="STRING" id="44689.Q54W16"/>
<dbReference type="PaxDb" id="44689-DDB0266862"/>
<dbReference type="EnsemblProtists" id="EAL67455">
    <property type="protein sequence ID" value="EAL67455"/>
    <property type="gene ID" value="DDB_G0279967"/>
</dbReference>
<dbReference type="GeneID" id="8622319"/>
<dbReference type="KEGG" id="ddi:DDB_G0279967"/>
<dbReference type="dictyBase" id="DDB_G0279967"/>
<dbReference type="VEuPathDB" id="AmoebaDB:DDB_G0279967"/>
<dbReference type="eggNOG" id="KOG3102">
    <property type="taxonomic scope" value="Eukaryota"/>
</dbReference>
<dbReference type="HOGENOM" id="CLU_1013467_0_0_1"/>
<dbReference type="InParanoid" id="Q54W16"/>
<dbReference type="OMA" id="EHVDGNY"/>
<dbReference type="PhylomeDB" id="Q54W16"/>
<dbReference type="PRO" id="PR:Q54W16"/>
<dbReference type="Proteomes" id="UP000002195">
    <property type="component" value="Chromosome 3"/>
</dbReference>
<dbReference type="GO" id="GO:0005634">
    <property type="term" value="C:nucleus"/>
    <property type="evidence" value="ECO:0000318"/>
    <property type="project" value="GO_Central"/>
</dbReference>
<dbReference type="GO" id="GO:0000175">
    <property type="term" value="F:3'-5'-RNA exonuclease activity"/>
    <property type="evidence" value="ECO:0000318"/>
    <property type="project" value="GO_Central"/>
</dbReference>
<dbReference type="GO" id="GO:0016829">
    <property type="term" value="F:lyase activity"/>
    <property type="evidence" value="ECO:0007669"/>
    <property type="project" value="UniProtKB-KW"/>
</dbReference>
<dbReference type="GO" id="GO:1990838">
    <property type="term" value="F:poly(U)-specific exoribonuclease activity, producing 3' uridine cyclic phosphate ends"/>
    <property type="evidence" value="ECO:0007669"/>
    <property type="project" value="UniProtKB-UniRule"/>
</dbReference>
<dbReference type="GO" id="GO:0034477">
    <property type="term" value="P:U6 snRNA 3'-end processing"/>
    <property type="evidence" value="ECO:0000318"/>
    <property type="project" value="GO_Central"/>
</dbReference>
<dbReference type="FunFam" id="3.90.1140.10:FF:000026">
    <property type="entry name" value="U6 snRNA phosphodiesterase"/>
    <property type="match status" value="1"/>
</dbReference>
<dbReference type="Gene3D" id="3.90.1140.10">
    <property type="entry name" value="Cyclic phosphodiesterase"/>
    <property type="match status" value="1"/>
</dbReference>
<dbReference type="HAMAP" id="MF_03040">
    <property type="entry name" value="USB1"/>
    <property type="match status" value="1"/>
</dbReference>
<dbReference type="InterPro" id="IPR027521">
    <property type="entry name" value="Usb1"/>
</dbReference>
<dbReference type="PANTHER" id="PTHR13522">
    <property type="entry name" value="U6 SNRNA PHOSPHODIESTERASE 1"/>
    <property type="match status" value="1"/>
</dbReference>
<dbReference type="PANTHER" id="PTHR13522:SF3">
    <property type="entry name" value="U6 SNRNA PHOSPHODIESTERASE 1"/>
    <property type="match status" value="1"/>
</dbReference>
<dbReference type="Pfam" id="PF09749">
    <property type="entry name" value="HVSL"/>
    <property type="match status" value="1"/>
</dbReference>
<protein>
    <recommendedName>
        <fullName evidence="1">U6 snRNA phosphodiesterase 1</fullName>
    </recommendedName>
    <alternativeName>
        <fullName evidence="1">3'-5' RNA exonuclease USB1</fullName>
        <ecNumber evidence="1">4.6.1.-</ecNumber>
    </alternativeName>
</protein>
<gene>
    <name type="ORF">DDB_G0279967</name>
</gene>
<feature type="chain" id="PRO_0000345008" description="U6 snRNA phosphodiesterase 1">
    <location>
        <begin position="1"/>
        <end position="275"/>
    </location>
</feature>
<feature type="region of interest" description="Disordered" evidence="3">
    <location>
        <begin position="1"/>
        <end position="25"/>
    </location>
</feature>
<feature type="active site" description="Proton acceptor" evidence="2">
    <location>
        <position position="122"/>
    </location>
</feature>
<feature type="active site" description="Proton donor" evidence="2">
    <location>
        <position position="212"/>
    </location>
</feature>
<feature type="binding site" evidence="1">
    <location>
        <begin position="122"/>
        <end position="124"/>
    </location>
    <ligand>
        <name>AMP</name>
        <dbReference type="ChEBI" id="CHEBI:456215"/>
    </ligand>
</feature>
<feature type="binding site" evidence="1">
    <location>
        <position position="206"/>
    </location>
    <ligand>
        <name>AMP</name>
        <dbReference type="ChEBI" id="CHEBI:456215"/>
    </ligand>
</feature>
<feature type="binding site" evidence="1">
    <location>
        <position position="206"/>
    </location>
    <ligand>
        <name>UMP</name>
        <dbReference type="ChEBI" id="CHEBI:57865"/>
    </ligand>
</feature>
<feature type="binding site" evidence="1">
    <location>
        <begin position="208"/>
        <end position="214"/>
    </location>
    <ligand>
        <name>AMP</name>
        <dbReference type="ChEBI" id="CHEBI:456215"/>
    </ligand>
</feature>
<feature type="binding site" evidence="1">
    <location>
        <begin position="210"/>
        <end position="214"/>
    </location>
    <ligand>
        <name>UMP</name>
        <dbReference type="ChEBI" id="CHEBI:57865"/>
    </ligand>
</feature>
<keyword id="KW-0378">Hydrolase</keyword>
<keyword id="KW-0456">Lyase</keyword>
<keyword id="KW-0540">Nuclease</keyword>
<keyword id="KW-0539">Nucleus</keyword>
<keyword id="KW-1185">Reference proteome</keyword>
<organism>
    <name type="scientific">Dictyostelium discoideum</name>
    <name type="common">Social amoeba</name>
    <dbReference type="NCBI Taxonomy" id="44689"/>
    <lineage>
        <taxon>Eukaryota</taxon>
        <taxon>Amoebozoa</taxon>
        <taxon>Evosea</taxon>
        <taxon>Eumycetozoa</taxon>
        <taxon>Dictyostelia</taxon>
        <taxon>Dictyosteliales</taxon>
        <taxon>Dictyosteliaceae</taxon>
        <taxon>Dictyostelium</taxon>
    </lineage>
</organism>
<comment type="function">
    <text evidence="1">3'-5' RNA exonuclease that trims the 3' end of oligo(U) tracts of the pre-U6 small nuclear RNA (snRNA) molecule, leading to the formation of a mature U6 snRNA 3' end-terminated with a 2',3'-cyclic phosphate. Participates in the U6 snRNA 3' end processing that prevents U6 snRNA degradation.</text>
</comment>
<comment type="catalytic activity">
    <reaction evidence="1">
        <text>a 3'-end uridylyl-uridine-RNA = a 3'-end 2',3'-cyclophospho-uridine-RNA + uridine</text>
        <dbReference type="Rhea" id="RHEA:46052"/>
        <dbReference type="Rhea" id="RHEA-COMP:17384"/>
        <dbReference type="Rhea" id="RHEA-COMP:17385"/>
        <dbReference type="ChEBI" id="CHEBI:16704"/>
        <dbReference type="ChEBI" id="CHEBI:85643"/>
        <dbReference type="ChEBI" id="CHEBI:85644"/>
    </reaction>
    <physiologicalReaction direction="left-to-right" evidence="1">
        <dbReference type="Rhea" id="RHEA:46053"/>
    </physiologicalReaction>
</comment>
<comment type="subcellular location">
    <subcellularLocation>
        <location evidence="2">Nucleus</location>
    </subcellularLocation>
</comment>
<comment type="similarity">
    <text evidence="2">Belongs to the 2H phosphoesterase superfamily. USB1 family.</text>
</comment>
<name>USB1_DICDI</name>
<accession>Q54W16</accession>
<sequence>MEFLKHYEDDEDQDDENNTKDENVNKINKRQHFEIENVIDEIPDLPLSFFENFKKIKHYSSEIIDETNKKTRLFEHVEGNYPTFIYFKVPTKSRNDIKELIEQVKEIGNEINIKQDTETCFHISISRTFPIREHHIETFTQELKKTLKNQRSIDIQLSKECCVFINDNQSRIFLSIPINQSFKSNILKLIERIDSCLSLFKFPKYYDNPEPHLSISWSLITNNNNETNDENINYIPLNKFKNKEIIRDNLKLTDSFKVSRIFWNIGKTESFIDLQ</sequence>